<accession>A7ZAW0</accession>
<sequence>MGYEAGQYDVIVIGAGHAGVEAALASARQGAKTLVLTINLDMVAFMPCNPSVGGPAKGIVVREIDALGGEMARNIDKTHIQMRMLNTGKGPAVRALRAQADKFQYQHEMKHTLEKTPNLTLLQGIAERLIIEDGECRGVITQTGAEYKAKTVVLTTGTYLRGRIILGDLSYSSGPNNQQPSIKLSEHLEELGFDLVRFKTGTPPRVSSDSIDYSKTEIQPGDPVPRAFSYETVEYITDQLPCWLTYTSPETHEIIDSNLHRSPMYSGMIKGTGPRYCPSIEDKVVRFNDKPRHQIFLEPEGRNTQEVYVQGLSTSLPEDVQQRMLATIPGLEKVQMMRAGYAIEYDAIVPTQLWPTLETKKIPNLYTAGQINGTSGYEEAAGQGIMAGINAGRKALGKEEVILSRSDAYIGVLIDDLVTKGTNEPYRLLTSRAEYRLLLRHDNADLRLTEIGHDIGLISDERYEAFEKKKAAIEAEKKRLWSVIIKPSPENQEYIRSLGGSELKDGVRGTDLMKRPEMNYETVTKLAPADSPVPQDVAEQVEIQVKYEGYIEKSLQQVEKLKKMENKKIPDRIDYDAIKGIATEARQKLKEVRPLSVAQASRISGVNPADISILLVYLEQGRIAKVAE</sequence>
<dbReference type="EMBL" id="CP000560">
    <property type="protein sequence ID" value="ABS76136.1"/>
    <property type="molecule type" value="Genomic_DNA"/>
</dbReference>
<dbReference type="RefSeq" id="WP_007615086.1">
    <property type="nucleotide sequence ID" value="NC_009725.2"/>
</dbReference>
<dbReference type="SMR" id="A7ZAW0"/>
<dbReference type="GeneID" id="93082945"/>
<dbReference type="KEGG" id="bay:RBAM_038110"/>
<dbReference type="HOGENOM" id="CLU_007831_2_2_9"/>
<dbReference type="Proteomes" id="UP000001120">
    <property type="component" value="Chromosome"/>
</dbReference>
<dbReference type="GO" id="GO:0005829">
    <property type="term" value="C:cytosol"/>
    <property type="evidence" value="ECO:0007669"/>
    <property type="project" value="TreeGrafter"/>
</dbReference>
<dbReference type="GO" id="GO:0050660">
    <property type="term" value="F:flavin adenine dinucleotide binding"/>
    <property type="evidence" value="ECO:0007669"/>
    <property type="project" value="UniProtKB-UniRule"/>
</dbReference>
<dbReference type="GO" id="GO:0030488">
    <property type="term" value="P:tRNA methylation"/>
    <property type="evidence" value="ECO:0007669"/>
    <property type="project" value="TreeGrafter"/>
</dbReference>
<dbReference type="GO" id="GO:0002098">
    <property type="term" value="P:tRNA wobble uridine modification"/>
    <property type="evidence" value="ECO:0007669"/>
    <property type="project" value="InterPro"/>
</dbReference>
<dbReference type="FunFam" id="1.10.10.1800:FF:000001">
    <property type="entry name" value="tRNA uridine 5-carboxymethylaminomethyl modification enzyme MnmG"/>
    <property type="match status" value="1"/>
</dbReference>
<dbReference type="FunFam" id="1.10.150.570:FF:000001">
    <property type="entry name" value="tRNA uridine 5-carboxymethylaminomethyl modification enzyme MnmG"/>
    <property type="match status" value="1"/>
</dbReference>
<dbReference type="FunFam" id="3.50.50.60:FF:000002">
    <property type="entry name" value="tRNA uridine 5-carboxymethylaminomethyl modification enzyme MnmG"/>
    <property type="match status" value="1"/>
</dbReference>
<dbReference type="FunFam" id="3.50.50.60:FF:000063">
    <property type="entry name" value="tRNA uridine 5-carboxymethylaminomethyl modification enzyme MnmG"/>
    <property type="match status" value="1"/>
</dbReference>
<dbReference type="Gene3D" id="3.50.50.60">
    <property type="entry name" value="FAD/NAD(P)-binding domain"/>
    <property type="match status" value="2"/>
</dbReference>
<dbReference type="Gene3D" id="1.10.150.570">
    <property type="entry name" value="GidA associated domain, C-terminal subdomain"/>
    <property type="match status" value="1"/>
</dbReference>
<dbReference type="Gene3D" id="1.10.10.1800">
    <property type="entry name" value="tRNA uridine 5-carboxymethylaminomethyl modification enzyme MnmG/GidA"/>
    <property type="match status" value="1"/>
</dbReference>
<dbReference type="HAMAP" id="MF_00129">
    <property type="entry name" value="MnmG_GidA"/>
    <property type="match status" value="1"/>
</dbReference>
<dbReference type="InterPro" id="IPR036188">
    <property type="entry name" value="FAD/NAD-bd_sf"/>
</dbReference>
<dbReference type="InterPro" id="IPR049312">
    <property type="entry name" value="GIDA_C_N"/>
</dbReference>
<dbReference type="InterPro" id="IPR004416">
    <property type="entry name" value="MnmG"/>
</dbReference>
<dbReference type="InterPro" id="IPR002218">
    <property type="entry name" value="MnmG-rel"/>
</dbReference>
<dbReference type="InterPro" id="IPR020595">
    <property type="entry name" value="MnmG-rel_CS"/>
</dbReference>
<dbReference type="InterPro" id="IPR026904">
    <property type="entry name" value="MnmG_C"/>
</dbReference>
<dbReference type="InterPro" id="IPR047001">
    <property type="entry name" value="MnmG_C_subdom"/>
</dbReference>
<dbReference type="InterPro" id="IPR044920">
    <property type="entry name" value="MnmG_C_subdom_sf"/>
</dbReference>
<dbReference type="InterPro" id="IPR040131">
    <property type="entry name" value="MnmG_N"/>
</dbReference>
<dbReference type="NCBIfam" id="TIGR00136">
    <property type="entry name" value="mnmG_gidA"/>
    <property type="match status" value="1"/>
</dbReference>
<dbReference type="PANTHER" id="PTHR11806">
    <property type="entry name" value="GLUCOSE INHIBITED DIVISION PROTEIN A"/>
    <property type="match status" value="1"/>
</dbReference>
<dbReference type="PANTHER" id="PTHR11806:SF0">
    <property type="entry name" value="PROTEIN MTO1 HOMOLOG, MITOCHONDRIAL"/>
    <property type="match status" value="1"/>
</dbReference>
<dbReference type="Pfam" id="PF01134">
    <property type="entry name" value="GIDA"/>
    <property type="match status" value="1"/>
</dbReference>
<dbReference type="Pfam" id="PF21680">
    <property type="entry name" value="GIDA_C_1st"/>
    <property type="match status" value="1"/>
</dbReference>
<dbReference type="Pfam" id="PF13932">
    <property type="entry name" value="SAM_GIDA_C"/>
    <property type="match status" value="1"/>
</dbReference>
<dbReference type="PRINTS" id="PR00411">
    <property type="entry name" value="PNDRDTASEI"/>
</dbReference>
<dbReference type="SMART" id="SM01228">
    <property type="entry name" value="GIDA_assoc_3"/>
    <property type="match status" value="1"/>
</dbReference>
<dbReference type="SUPFAM" id="SSF51905">
    <property type="entry name" value="FAD/NAD(P)-binding domain"/>
    <property type="match status" value="1"/>
</dbReference>
<dbReference type="PROSITE" id="PS01280">
    <property type="entry name" value="GIDA_1"/>
    <property type="match status" value="1"/>
</dbReference>
<dbReference type="PROSITE" id="PS01281">
    <property type="entry name" value="GIDA_2"/>
    <property type="match status" value="1"/>
</dbReference>
<gene>
    <name evidence="1" type="primary">mnmG</name>
    <name evidence="1" type="synonym">gidA</name>
    <name type="ordered locus">RBAM_038110</name>
</gene>
<evidence type="ECO:0000255" key="1">
    <source>
        <dbReference type="HAMAP-Rule" id="MF_00129"/>
    </source>
</evidence>
<comment type="function">
    <text evidence="1">NAD-binding protein involved in the addition of a carboxymethylaminomethyl (cmnm) group at the wobble position (U34) of certain tRNAs, forming tRNA-cmnm(5)s(2)U34.</text>
</comment>
<comment type="cofactor">
    <cofactor evidence="1">
        <name>FAD</name>
        <dbReference type="ChEBI" id="CHEBI:57692"/>
    </cofactor>
</comment>
<comment type="subunit">
    <text evidence="1">Homodimer. Heterotetramer of two MnmE and two MnmG subunits.</text>
</comment>
<comment type="subcellular location">
    <subcellularLocation>
        <location evidence="1">Cytoplasm</location>
    </subcellularLocation>
</comment>
<comment type="similarity">
    <text evidence="1">Belongs to the MnmG family.</text>
</comment>
<reference key="1">
    <citation type="journal article" date="2007" name="Nat. Biotechnol.">
        <title>Comparative analysis of the complete genome sequence of the plant growth-promoting bacterium Bacillus amyloliquefaciens FZB42.</title>
        <authorList>
            <person name="Chen X.H."/>
            <person name="Koumoutsi A."/>
            <person name="Scholz R."/>
            <person name="Eisenreich A."/>
            <person name="Schneider K."/>
            <person name="Heinemeyer I."/>
            <person name="Morgenstern B."/>
            <person name="Voss B."/>
            <person name="Hess W.R."/>
            <person name="Reva O."/>
            <person name="Junge H."/>
            <person name="Voigt B."/>
            <person name="Jungblut P.R."/>
            <person name="Vater J."/>
            <person name="Suessmuth R."/>
            <person name="Liesegang H."/>
            <person name="Strittmatter A."/>
            <person name="Gottschalk G."/>
            <person name="Borriss R."/>
        </authorList>
    </citation>
    <scope>NUCLEOTIDE SEQUENCE [LARGE SCALE GENOMIC DNA]</scope>
    <source>
        <strain>DSM 23117 / BGSC 10A6 / LMG 26770 / FZB42</strain>
    </source>
</reference>
<feature type="chain" id="PRO_1000016547" description="tRNA uridine 5-carboxymethylaminomethyl modification enzyme MnmG">
    <location>
        <begin position="1"/>
        <end position="628"/>
    </location>
</feature>
<feature type="binding site" evidence="1">
    <location>
        <begin position="14"/>
        <end position="19"/>
    </location>
    <ligand>
        <name>FAD</name>
        <dbReference type="ChEBI" id="CHEBI:57692"/>
    </ligand>
</feature>
<feature type="binding site" evidence="1">
    <location>
        <begin position="273"/>
        <end position="287"/>
    </location>
    <ligand>
        <name>NAD(+)</name>
        <dbReference type="ChEBI" id="CHEBI:57540"/>
    </ligand>
</feature>
<protein>
    <recommendedName>
        <fullName evidence="1">tRNA uridine 5-carboxymethylaminomethyl modification enzyme MnmG</fullName>
    </recommendedName>
    <alternativeName>
        <fullName evidence="1">Glucose-inhibited division protein A</fullName>
    </alternativeName>
</protein>
<name>MNMG_BACVZ</name>
<organism>
    <name type="scientific">Bacillus velezensis (strain DSM 23117 / BGSC 10A6 / LMG 26770 / FZB42)</name>
    <name type="common">Bacillus amyloliquefaciens subsp. plantarum</name>
    <dbReference type="NCBI Taxonomy" id="326423"/>
    <lineage>
        <taxon>Bacteria</taxon>
        <taxon>Bacillati</taxon>
        <taxon>Bacillota</taxon>
        <taxon>Bacilli</taxon>
        <taxon>Bacillales</taxon>
        <taxon>Bacillaceae</taxon>
        <taxon>Bacillus</taxon>
        <taxon>Bacillus amyloliquefaciens group</taxon>
    </lineage>
</organism>
<keyword id="KW-0963">Cytoplasm</keyword>
<keyword id="KW-0274">FAD</keyword>
<keyword id="KW-0285">Flavoprotein</keyword>
<keyword id="KW-0520">NAD</keyword>
<keyword id="KW-0819">tRNA processing</keyword>
<proteinExistence type="inferred from homology"/>